<accession>Q6D0A0</accession>
<gene>
    <name evidence="1" type="primary">trpR</name>
    <name type="ordered locus">ECA3899</name>
</gene>
<feature type="chain" id="PRO_0000196499" description="Trp operon repressor">
    <location>
        <begin position="1"/>
        <end position="110"/>
    </location>
</feature>
<feature type="DNA-binding region" evidence="1">
    <location>
        <begin position="68"/>
        <end position="91"/>
    </location>
</feature>
<dbReference type="EMBL" id="BX950851">
    <property type="protein sequence ID" value="CAG76797.1"/>
    <property type="molecule type" value="Genomic_DNA"/>
</dbReference>
<dbReference type="RefSeq" id="WP_011095396.1">
    <property type="nucleotide sequence ID" value="NC_004547.2"/>
</dbReference>
<dbReference type="SMR" id="Q6D0A0"/>
<dbReference type="STRING" id="218491.ECA3899"/>
<dbReference type="GeneID" id="57210515"/>
<dbReference type="KEGG" id="eca:ECA3899"/>
<dbReference type="PATRIC" id="fig|218491.5.peg.3958"/>
<dbReference type="eggNOG" id="COG2973">
    <property type="taxonomic scope" value="Bacteria"/>
</dbReference>
<dbReference type="HOGENOM" id="CLU_147939_0_0_6"/>
<dbReference type="OrthoDB" id="5704033at2"/>
<dbReference type="Proteomes" id="UP000007966">
    <property type="component" value="Chromosome"/>
</dbReference>
<dbReference type="GO" id="GO:0005737">
    <property type="term" value="C:cytoplasm"/>
    <property type="evidence" value="ECO:0007669"/>
    <property type="project" value="UniProtKB-SubCell"/>
</dbReference>
<dbReference type="GO" id="GO:0003700">
    <property type="term" value="F:DNA-binding transcription factor activity"/>
    <property type="evidence" value="ECO:0007669"/>
    <property type="project" value="InterPro"/>
</dbReference>
<dbReference type="GO" id="GO:0043565">
    <property type="term" value="F:sequence-specific DNA binding"/>
    <property type="evidence" value="ECO:0007669"/>
    <property type="project" value="InterPro"/>
</dbReference>
<dbReference type="GO" id="GO:0045892">
    <property type="term" value="P:negative regulation of DNA-templated transcription"/>
    <property type="evidence" value="ECO:0007669"/>
    <property type="project" value="UniProtKB-UniRule"/>
</dbReference>
<dbReference type="FunFam" id="1.10.1270.10:FF:000001">
    <property type="entry name" value="Trp operon repressor"/>
    <property type="match status" value="1"/>
</dbReference>
<dbReference type="Gene3D" id="1.10.1270.10">
    <property type="entry name" value="TrpR-like"/>
    <property type="match status" value="1"/>
</dbReference>
<dbReference type="HAMAP" id="MF_00475">
    <property type="entry name" value="Trp_repressor"/>
    <property type="match status" value="1"/>
</dbReference>
<dbReference type="InterPro" id="IPR000831">
    <property type="entry name" value="Trp_repress"/>
</dbReference>
<dbReference type="InterPro" id="IPR013335">
    <property type="entry name" value="Trp_repress_bac"/>
</dbReference>
<dbReference type="InterPro" id="IPR010921">
    <property type="entry name" value="Trp_repressor/repl_initiator"/>
</dbReference>
<dbReference type="InterPro" id="IPR038116">
    <property type="entry name" value="TrpR-like_sf"/>
</dbReference>
<dbReference type="NCBIfam" id="TIGR01321">
    <property type="entry name" value="TrpR"/>
    <property type="match status" value="1"/>
</dbReference>
<dbReference type="PANTHER" id="PTHR38025">
    <property type="entry name" value="TRP OPERON REPRESSOR"/>
    <property type="match status" value="1"/>
</dbReference>
<dbReference type="PANTHER" id="PTHR38025:SF1">
    <property type="entry name" value="TRP OPERON REPRESSOR"/>
    <property type="match status" value="1"/>
</dbReference>
<dbReference type="Pfam" id="PF01371">
    <property type="entry name" value="Trp_repressor"/>
    <property type="match status" value="1"/>
</dbReference>
<dbReference type="PIRSF" id="PIRSF003196">
    <property type="entry name" value="Trp_repressor"/>
    <property type="match status" value="1"/>
</dbReference>
<dbReference type="SUPFAM" id="SSF48295">
    <property type="entry name" value="TrpR-like"/>
    <property type="match status" value="1"/>
</dbReference>
<proteinExistence type="inferred from homology"/>
<name>TRPR_PECAS</name>
<evidence type="ECO:0000255" key="1">
    <source>
        <dbReference type="HAMAP-Rule" id="MF_00475"/>
    </source>
</evidence>
<sequence>MTPLSLIDPALSEQDNEHWLRFVALLQQSIAEDLQLPLLQLLLTPDERTALGTRVRIVQELMRGEMSQRELKSELGAGIATITRGSNSLKAAPPALKIWLEAQLLSADKP</sequence>
<organism>
    <name type="scientific">Pectobacterium atrosepticum (strain SCRI 1043 / ATCC BAA-672)</name>
    <name type="common">Erwinia carotovora subsp. atroseptica</name>
    <dbReference type="NCBI Taxonomy" id="218491"/>
    <lineage>
        <taxon>Bacteria</taxon>
        <taxon>Pseudomonadati</taxon>
        <taxon>Pseudomonadota</taxon>
        <taxon>Gammaproteobacteria</taxon>
        <taxon>Enterobacterales</taxon>
        <taxon>Pectobacteriaceae</taxon>
        <taxon>Pectobacterium</taxon>
    </lineage>
</organism>
<reference key="1">
    <citation type="journal article" date="2004" name="Proc. Natl. Acad. Sci. U.S.A.">
        <title>Genome sequence of the enterobacterial phytopathogen Erwinia carotovora subsp. atroseptica and characterization of virulence factors.</title>
        <authorList>
            <person name="Bell K.S."/>
            <person name="Sebaihia M."/>
            <person name="Pritchard L."/>
            <person name="Holden M.T.G."/>
            <person name="Hyman L.J."/>
            <person name="Holeva M.C."/>
            <person name="Thomson N.R."/>
            <person name="Bentley S.D."/>
            <person name="Churcher L.J.C."/>
            <person name="Mungall K."/>
            <person name="Atkin R."/>
            <person name="Bason N."/>
            <person name="Brooks K."/>
            <person name="Chillingworth T."/>
            <person name="Clark K."/>
            <person name="Doggett J."/>
            <person name="Fraser A."/>
            <person name="Hance Z."/>
            <person name="Hauser H."/>
            <person name="Jagels K."/>
            <person name="Moule S."/>
            <person name="Norbertczak H."/>
            <person name="Ormond D."/>
            <person name="Price C."/>
            <person name="Quail M.A."/>
            <person name="Sanders M."/>
            <person name="Walker D."/>
            <person name="Whitehead S."/>
            <person name="Salmond G.P.C."/>
            <person name="Birch P.R.J."/>
            <person name="Parkhill J."/>
            <person name="Toth I.K."/>
        </authorList>
    </citation>
    <scope>NUCLEOTIDE SEQUENCE [LARGE SCALE GENOMIC DNA]</scope>
    <source>
        <strain>SCRI 1043 / ATCC BAA-672</strain>
    </source>
</reference>
<keyword id="KW-0963">Cytoplasm</keyword>
<keyword id="KW-0238">DNA-binding</keyword>
<keyword id="KW-1185">Reference proteome</keyword>
<keyword id="KW-0678">Repressor</keyword>
<keyword id="KW-0804">Transcription</keyword>
<keyword id="KW-0805">Transcription regulation</keyword>
<protein>
    <recommendedName>
        <fullName evidence="1">Trp operon repressor</fullName>
    </recommendedName>
</protein>
<comment type="function">
    <text evidence="1">This protein is an aporepressor. When complexed with L-tryptophan it binds the operator region of the trp operon (5'-ACTAGT-'3') and prevents the initiation of transcription. The complex also regulates trp repressor biosynthesis by binding to its regulatory region.</text>
</comment>
<comment type="subunit">
    <text evidence="1">Homodimer.</text>
</comment>
<comment type="subcellular location">
    <subcellularLocation>
        <location evidence="1">Cytoplasm</location>
    </subcellularLocation>
</comment>
<comment type="similarity">
    <text evidence="1">Belongs to the TrpR family.</text>
</comment>